<sequence length="450" mass="50345">MHPIHLLRIVSSVRRLLQTNRCRSFSSCQHNMASIKHKNARRIEGLDKNVWVAFTSVAADPSIVNLGQGYPDIPPPSYVKEGLAQAAMVDRLNQYTRGFGHPTLVKALSKVYGKVYDRQLDPFKEILVTVGGYGSLFSTMQALVEEGDEVIIIEPFFDCYVPMVKMAGAKPVLIPLRLKSTATTGISSADWVLDQEELASKFNSKTKAIIVNTPNNPIGKIFSRSELQAIADLCIKHDTLCFSDEVYEWLIYKGHEHVKIATLPGMWDRTITVGSAGKTFSVTGWKLGWSIGPEHLIRHLQTVMQNSLYTCPTPLQEAVGRGLLRDFELMGQPDCYFSALALELEGKRDRMAAMLAQTGMTPVVPEGGYFMIVDVTALNQDLTHMGDDEPYDYKFVKWMIKEKKLAAIPVTAFVGEDSVKQFEKYIRLCFIKQESTLDAAEAILKNWNKG</sequence>
<reference key="1">
    <citation type="submission" date="2003-06" db="EMBL/GenBank/DDBJ databases">
        <authorList>
            <consortium name="NIH - Zebrafish Gene Collection (ZGC) project"/>
        </authorList>
    </citation>
    <scope>NUCLEOTIDE SEQUENCE [LARGE SCALE MRNA]</scope>
    <source>
        <tissue>Kidney</tissue>
    </source>
</reference>
<feature type="chain" id="PRO_0000287707" description="Kynurenine--oxoglutarate transaminase 3">
    <location>
        <begin position="1"/>
        <end position="450"/>
    </location>
</feature>
<feature type="binding site" evidence="1">
    <location>
        <position position="69"/>
    </location>
    <ligand>
        <name>substrate</name>
    </ligand>
</feature>
<feature type="binding site" evidence="1">
    <location>
        <position position="216"/>
    </location>
    <ligand>
        <name>substrate</name>
    </ligand>
</feature>
<feature type="binding site" evidence="1">
    <location>
        <position position="427"/>
    </location>
    <ligand>
        <name>substrate</name>
    </ligand>
</feature>
<feature type="modified residue" description="N6-(pyridoxal phosphate)lysine" evidence="1">
    <location>
        <position position="278"/>
    </location>
</feature>
<protein>
    <recommendedName>
        <fullName evidence="3">Kynurenine--oxoglutarate transaminase 3</fullName>
        <ecNumber evidence="3">2.6.1.7</ecNumber>
    </recommendedName>
    <alternativeName>
        <fullName evidence="3">Cysteine-S-conjugate beta-lyase 2</fullName>
        <ecNumber evidence="3">4.4.1.13</ecNumber>
    </alternativeName>
    <alternativeName>
        <fullName evidence="2">Kynurenine aminotransferase 3</fullName>
    </alternativeName>
    <alternativeName>
        <fullName>Kynurenine aminotransferase III</fullName>
        <shortName>KATIII</shortName>
    </alternativeName>
    <alternativeName>
        <fullName evidence="3">Kynurenine--glyoxylate transaminase</fullName>
        <ecNumber evidence="3">2.6.1.63</ecNumber>
    </alternativeName>
    <alternativeName>
        <fullName>Kynurenine--oxoglutarate transaminase III</fullName>
    </alternativeName>
</protein>
<dbReference type="EC" id="2.6.1.7" evidence="3"/>
<dbReference type="EC" id="4.4.1.13" evidence="3"/>
<dbReference type="EC" id="2.6.1.63" evidence="3"/>
<dbReference type="EMBL" id="BC053152">
    <property type="protein sequence ID" value="AAH53152.1"/>
    <property type="status" value="ALT_INIT"/>
    <property type="molecule type" value="mRNA"/>
</dbReference>
<dbReference type="SMR" id="Q7T3E5"/>
<dbReference type="FunCoup" id="Q7T3E5">
    <property type="interactions" value="1498"/>
</dbReference>
<dbReference type="STRING" id="7955.ENSDARP00000135662"/>
<dbReference type="PaxDb" id="7955-ENSDARP00000063535"/>
<dbReference type="AGR" id="ZFIN:ZDB-GENE-040426-1299"/>
<dbReference type="ZFIN" id="ZDB-GENE-040426-1299">
    <property type="gene designation" value="kyat3.2"/>
</dbReference>
<dbReference type="eggNOG" id="KOG0257">
    <property type="taxonomic scope" value="Eukaryota"/>
</dbReference>
<dbReference type="InParanoid" id="Q7T3E5"/>
<dbReference type="PhylomeDB" id="Q7T3E5"/>
<dbReference type="UniPathway" id="UPA00334">
    <property type="reaction ID" value="UER00726"/>
</dbReference>
<dbReference type="PRO" id="PR:Q7T3E5"/>
<dbReference type="Proteomes" id="UP000000437">
    <property type="component" value="Unplaced"/>
</dbReference>
<dbReference type="GO" id="GO:0005737">
    <property type="term" value="C:cytoplasm"/>
    <property type="evidence" value="ECO:0000318"/>
    <property type="project" value="GO_Central"/>
</dbReference>
<dbReference type="GO" id="GO:0005739">
    <property type="term" value="C:mitochondrion"/>
    <property type="evidence" value="ECO:0000318"/>
    <property type="project" value="GO_Central"/>
</dbReference>
<dbReference type="GO" id="GO:0047804">
    <property type="term" value="F:cysteine-S-conjugate beta-lyase activity"/>
    <property type="evidence" value="ECO:0007669"/>
    <property type="project" value="UniProtKB-EC"/>
</dbReference>
<dbReference type="GO" id="GO:0047315">
    <property type="term" value="F:kynurenine-glyoxylate transaminase activity"/>
    <property type="evidence" value="ECO:0000250"/>
    <property type="project" value="UniProtKB"/>
</dbReference>
<dbReference type="GO" id="GO:0016212">
    <property type="term" value="F:kynurenine-oxoglutarate transaminase activity"/>
    <property type="evidence" value="ECO:0000250"/>
    <property type="project" value="UniProtKB"/>
</dbReference>
<dbReference type="GO" id="GO:0030170">
    <property type="term" value="F:pyridoxal phosphate binding"/>
    <property type="evidence" value="ECO:0007669"/>
    <property type="project" value="InterPro"/>
</dbReference>
<dbReference type="GO" id="GO:0006520">
    <property type="term" value="P:amino acid metabolic process"/>
    <property type="evidence" value="ECO:0000250"/>
    <property type="project" value="UniProtKB"/>
</dbReference>
<dbReference type="GO" id="GO:0009058">
    <property type="term" value="P:biosynthetic process"/>
    <property type="evidence" value="ECO:0007669"/>
    <property type="project" value="InterPro"/>
</dbReference>
<dbReference type="GO" id="GO:0070189">
    <property type="term" value="P:kynurenine metabolic process"/>
    <property type="evidence" value="ECO:0000250"/>
    <property type="project" value="UniProtKB"/>
</dbReference>
<dbReference type="GO" id="GO:0097053">
    <property type="term" value="P:L-kynurenine catabolic process"/>
    <property type="evidence" value="ECO:0007669"/>
    <property type="project" value="UniProtKB-UniPathway"/>
</dbReference>
<dbReference type="CDD" id="cd00609">
    <property type="entry name" value="AAT_like"/>
    <property type="match status" value="1"/>
</dbReference>
<dbReference type="FunFam" id="3.90.1150.10:FF:000262">
    <property type="entry name" value="Kynurenine aminotransferase, putative"/>
    <property type="match status" value="1"/>
</dbReference>
<dbReference type="FunFam" id="3.40.640.10:FF:000024">
    <property type="entry name" value="Kynurenine--oxoglutarate transaminase 3"/>
    <property type="match status" value="1"/>
</dbReference>
<dbReference type="Gene3D" id="3.90.1150.10">
    <property type="entry name" value="Aspartate Aminotransferase, domain 1"/>
    <property type="match status" value="1"/>
</dbReference>
<dbReference type="Gene3D" id="3.40.640.10">
    <property type="entry name" value="Type I PLP-dependent aspartate aminotransferase-like (Major domain)"/>
    <property type="match status" value="1"/>
</dbReference>
<dbReference type="InterPro" id="IPR004839">
    <property type="entry name" value="Aminotransferase_I/II_large"/>
</dbReference>
<dbReference type="InterPro" id="IPR051326">
    <property type="entry name" value="Kynurenine-oxoglutarate_AT"/>
</dbReference>
<dbReference type="InterPro" id="IPR015424">
    <property type="entry name" value="PyrdxlP-dep_Trfase"/>
</dbReference>
<dbReference type="InterPro" id="IPR015421">
    <property type="entry name" value="PyrdxlP-dep_Trfase_major"/>
</dbReference>
<dbReference type="InterPro" id="IPR015422">
    <property type="entry name" value="PyrdxlP-dep_Trfase_small"/>
</dbReference>
<dbReference type="PANTHER" id="PTHR43807">
    <property type="entry name" value="FI04487P"/>
    <property type="match status" value="1"/>
</dbReference>
<dbReference type="PANTHER" id="PTHR43807:SF6">
    <property type="entry name" value="KYNURENINE--OXOGLUTARATE TRANSAMINASE 3"/>
    <property type="match status" value="1"/>
</dbReference>
<dbReference type="Pfam" id="PF00155">
    <property type="entry name" value="Aminotran_1_2"/>
    <property type="match status" value="1"/>
</dbReference>
<dbReference type="SUPFAM" id="SSF53383">
    <property type="entry name" value="PLP-dependent transferases"/>
    <property type="match status" value="1"/>
</dbReference>
<gene>
    <name evidence="2" type="primary">kyat3</name>
    <name type="synonym">ccbl2</name>
    <name type="synonym">kat3</name>
    <name type="ORF">zgc:63929</name>
</gene>
<accession>Q7T3E5</accession>
<name>KAT3_DANRE</name>
<proteinExistence type="evidence at transcript level"/>
<keyword id="KW-0032">Aminotransferase</keyword>
<keyword id="KW-0456">Lyase</keyword>
<keyword id="KW-0663">Pyridoxal phosphate</keyword>
<keyword id="KW-1185">Reference proteome</keyword>
<keyword id="KW-0808">Transferase</keyword>
<organism>
    <name type="scientific">Danio rerio</name>
    <name type="common">Zebrafish</name>
    <name type="synonym">Brachydanio rerio</name>
    <dbReference type="NCBI Taxonomy" id="7955"/>
    <lineage>
        <taxon>Eukaryota</taxon>
        <taxon>Metazoa</taxon>
        <taxon>Chordata</taxon>
        <taxon>Craniata</taxon>
        <taxon>Vertebrata</taxon>
        <taxon>Euteleostomi</taxon>
        <taxon>Actinopterygii</taxon>
        <taxon>Neopterygii</taxon>
        <taxon>Teleostei</taxon>
        <taxon>Ostariophysi</taxon>
        <taxon>Cypriniformes</taxon>
        <taxon>Danionidae</taxon>
        <taxon>Danioninae</taxon>
        <taxon>Danio</taxon>
    </lineage>
</organism>
<evidence type="ECO:0000250" key="1">
    <source>
        <dbReference type="UniProtKB" id="Q16773"/>
    </source>
</evidence>
<evidence type="ECO:0000250" key="2">
    <source>
        <dbReference type="UniProtKB" id="Q6YP21"/>
    </source>
</evidence>
<evidence type="ECO:0000250" key="3">
    <source>
        <dbReference type="UniProtKB" id="Q71RI9"/>
    </source>
</evidence>
<evidence type="ECO:0000305" key="4"/>
<comment type="function">
    <text evidence="3">Catalyzes the irreversible transamination of the L-tryptophan metabolite L-kynurenine to form kynurenic acid (KA), an intermediate in the tryptophan catabolic pathway which is also a broad spectrum antagonist of the three ionotropic excitatory amino acid receptors among others. May catalyze the beta-elimination of S-conjugates and Se-conjugates of L-(seleno)cysteine, resulting in the cleavage of the C-S or C-Se bond.</text>
</comment>
<comment type="catalytic activity">
    <reaction evidence="3">
        <text>L-kynurenine + 2-oxoglutarate = kynurenate + L-glutamate + H2O</text>
        <dbReference type="Rhea" id="RHEA:65560"/>
        <dbReference type="ChEBI" id="CHEBI:15377"/>
        <dbReference type="ChEBI" id="CHEBI:16810"/>
        <dbReference type="ChEBI" id="CHEBI:29985"/>
        <dbReference type="ChEBI" id="CHEBI:57959"/>
        <dbReference type="ChEBI" id="CHEBI:58454"/>
        <dbReference type="EC" id="2.6.1.7"/>
    </reaction>
    <physiologicalReaction direction="left-to-right" evidence="3">
        <dbReference type="Rhea" id="RHEA:65561"/>
    </physiologicalReaction>
</comment>
<comment type="catalytic activity">
    <reaction evidence="3">
        <text>L-kynurenine + glyoxylate = kynurenate + glycine + H2O</text>
        <dbReference type="Rhea" id="RHEA:65896"/>
        <dbReference type="ChEBI" id="CHEBI:15377"/>
        <dbReference type="ChEBI" id="CHEBI:36655"/>
        <dbReference type="ChEBI" id="CHEBI:57305"/>
        <dbReference type="ChEBI" id="CHEBI:57959"/>
        <dbReference type="ChEBI" id="CHEBI:58454"/>
        <dbReference type="EC" id="2.6.1.63"/>
    </reaction>
    <physiologicalReaction direction="left-to-right" evidence="3">
        <dbReference type="Rhea" id="RHEA:65897"/>
    </physiologicalReaction>
</comment>
<comment type="catalytic activity">
    <reaction evidence="3">
        <text>3-hydroxy-L-kynurenine + glyoxylate = xanthurenate + glycine + H2O</text>
        <dbReference type="Rhea" id="RHEA:65900"/>
        <dbReference type="ChEBI" id="CHEBI:15377"/>
        <dbReference type="ChEBI" id="CHEBI:36655"/>
        <dbReference type="ChEBI" id="CHEBI:57305"/>
        <dbReference type="ChEBI" id="CHEBI:58125"/>
        <dbReference type="ChEBI" id="CHEBI:71201"/>
        <dbReference type="EC" id="2.6.1.63"/>
    </reaction>
    <physiologicalReaction direction="left-to-right" evidence="3">
        <dbReference type="Rhea" id="RHEA:65901"/>
    </physiologicalReaction>
</comment>
<comment type="catalytic activity">
    <reaction evidence="3">
        <text>an S-substituted L-cysteine + H2O = a thiol + pyruvate + NH4(+)</text>
        <dbReference type="Rhea" id="RHEA:18121"/>
        <dbReference type="ChEBI" id="CHEBI:15361"/>
        <dbReference type="ChEBI" id="CHEBI:15377"/>
        <dbReference type="ChEBI" id="CHEBI:28938"/>
        <dbReference type="ChEBI" id="CHEBI:29256"/>
        <dbReference type="ChEBI" id="CHEBI:58717"/>
        <dbReference type="EC" id="4.4.1.13"/>
    </reaction>
    <physiologicalReaction direction="left-to-right" evidence="3">
        <dbReference type="Rhea" id="RHEA:18122"/>
    </physiologicalReaction>
</comment>
<comment type="cofactor">
    <cofactor evidence="3">
        <name>pyridoxal 5'-phosphate</name>
        <dbReference type="ChEBI" id="CHEBI:597326"/>
    </cofactor>
</comment>
<comment type="pathway">
    <text evidence="3">Amino-acid degradation; L-kynurenine degradation; kynurenate from L-kynurenine: step 1/2.</text>
</comment>
<comment type="subunit">
    <text evidence="3">Homodimer.</text>
</comment>
<comment type="similarity">
    <text evidence="4">Belongs to the class-I pyridoxal-phosphate-dependent aminotransferase family.</text>
</comment>
<comment type="sequence caution" evidence="4">
    <conflict type="erroneous initiation">
        <sequence resource="EMBL-CDS" id="AAH53152"/>
    </conflict>
</comment>